<keyword id="KW-0067">ATP-binding</keyword>
<keyword id="KW-0093">Biotin biosynthesis</keyword>
<keyword id="KW-0436">Ligase</keyword>
<keyword id="KW-0460">Magnesium</keyword>
<keyword id="KW-0547">Nucleotide-binding</keyword>
<keyword id="KW-1185">Reference proteome</keyword>
<feature type="chain" id="PRO_0000412088" description="6-carboxyhexanoate--CoA ligase">
    <location>
        <begin position="1"/>
        <end position="247"/>
    </location>
</feature>
<comment type="function">
    <text evidence="1">Catalyzes the transformation of pimelate into pimeloyl-CoA with concomitant hydrolysis of ATP to AMP.</text>
</comment>
<comment type="catalytic activity">
    <reaction evidence="1">
        <text>heptanedioate + ATP + CoA = 6-carboxyhexanoyl-CoA + AMP + diphosphate</text>
        <dbReference type="Rhea" id="RHEA:14781"/>
        <dbReference type="ChEBI" id="CHEBI:30616"/>
        <dbReference type="ChEBI" id="CHEBI:33019"/>
        <dbReference type="ChEBI" id="CHEBI:36165"/>
        <dbReference type="ChEBI" id="CHEBI:57287"/>
        <dbReference type="ChEBI" id="CHEBI:57360"/>
        <dbReference type="ChEBI" id="CHEBI:456215"/>
        <dbReference type="EC" id="6.2.1.14"/>
    </reaction>
</comment>
<comment type="cofactor">
    <cofactor evidence="1">
        <name>Mg(2+)</name>
        <dbReference type="ChEBI" id="CHEBI:18420"/>
    </cofactor>
</comment>
<comment type="pathway">
    <text evidence="1">Metabolic intermediate metabolism; pimeloyl-CoA biosynthesis; pimeloyl-CoA from pimelate: step 1/1.</text>
</comment>
<comment type="subunit">
    <text evidence="1">Homodimer.</text>
</comment>
<comment type="similarity">
    <text evidence="1">Belongs to the BioW family.</text>
</comment>
<name>BIOW_PERMH</name>
<sequence length="247" mass="28403">MYYSIKLRASRDGKHLSGGERIVLKDKIEEAVNQLYRKAEPKDPDEINIKIESIKEKPLVIKSSLKIENIICEDYKSSNQIALEILKRSTGIPVERLKELIDLVHTGSAPDGSNMRGAMIVNQKGERIELDHFRGIRTTTVDFLDRDKILKKLVKKGYTERTVDALCLTTKNMLYPDMIAEYCISDEPDYITGYVSTKDFYYRITPLKSEGNPKGGRIYFVRNSIDLQDFYRFLQEKPVLIEDVGID</sequence>
<accession>C0QSH0</accession>
<organism>
    <name type="scientific">Persephonella marina (strain DSM 14350 / EX-H1)</name>
    <dbReference type="NCBI Taxonomy" id="123214"/>
    <lineage>
        <taxon>Bacteria</taxon>
        <taxon>Pseudomonadati</taxon>
        <taxon>Aquificota</taxon>
        <taxon>Aquificia</taxon>
        <taxon>Aquificales</taxon>
        <taxon>Hydrogenothermaceae</taxon>
        <taxon>Persephonella</taxon>
    </lineage>
</organism>
<gene>
    <name evidence="1" type="primary">bioW</name>
    <name type="ordered locus">PERMA_1854</name>
</gene>
<proteinExistence type="inferred from homology"/>
<evidence type="ECO:0000255" key="1">
    <source>
        <dbReference type="HAMAP-Rule" id="MF_00668"/>
    </source>
</evidence>
<dbReference type="EC" id="6.2.1.14" evidence="1"/>
<dbReference type="EMBL" id="CP001230">
    <property type="protein sequence ID" value="ACO03122.1"/>
    <property type="molecule type" value="Genomic_DNA"/>
</dbReference>
<dbReference type="SMR" id="C0QSH0"/>
<dbReference type="STRING" id="123214.PERMA_1854"/>
<dbReference type="PaxDb" id="123214-PERMA_1854"/>
<dbReference type="KEGG" id="pmx:PERMA_1854"/>
<dbReference type="eggNOG" id="COG1424">
    <property type="taxonomic scope" value="Bacteria"/>
</dbReference>
<dbReference type="HOGENOM" id="CLU_076858_0_0_0"/>
<dbReference type="OrthoDB" id="9792985at2"/>
<dbReference type="UniPathway" id="UPA00999">
    <property type="reaction ID" value="UER00351"/>
</dbReference>
<dbReference type="Proteomes" id="UP000001366">
    <property type="component" value="Chromosome"/>
</dbReference>
<dbReference type="GO" id="GO:0042410">
    <property type="term" value="F:6-carboxyhexanoate-CoA ligase activity"/>
    <property type="evidence" value="ECO:0007669"/>
    <property type="project" value="UniProtKB-UniRule"/>
</dbReference>
<dbReference type="GO" id="GO:0005524">
    <property type="term" value="F:ATP binding"/>
    <property type="evidence" value="ECO:0007669"/>
    <property type="project" value="UniProtKB-KW"/>
</dbReference>
<dbReference type="GO" id="GO:0000287">
    <property type="term" value="F:magnesium ion binding"/>
    <property type="evidence" value="ECO:0007669"/>
    <property type="project" value="UniProtKB-UniRule"/>
</dbReference>
<dbReference type="GO" id="GO:0009102">
    <property type="term" value="P:biotin biosynthetic process"/>
    <property type="evidence" value="ECO:0007669"/>
    <property type="project" value="UniProtKB-UniRule"/>
</dbReference>
<dbReference type="HAMAP" id="MF_00668">
    <property type="entry name" value="BioW"/>
    <property type="match status" value="1"/>
</dbReference>
<dbReference type="InterPro" id="IPR005499">
    <property type="entry name" value="BioW"/>
</dbReference>
<dbReference type="NCBIfam" id="TIGR01204">
    <property type="entry name" value="bioW"/>
    <property type="match status" value="1"/>
</dbReference>
<dbReference type="NCBIfam" id="NF002360">
    <property type="entry name" value="PRK01322.1"/>
    <property type="match status" value="1"/>
</dbReference>
<dbReference type="Pfam" id="PF03744">
    <property type="entry name" value="BioW"/>
    <property type="match status" value="1"/>
</dbReference>
<protein>
    <recommendedName>
        <fullName evidence="1">6-carboxyhexanoate--CoA ligase</fullName>
        <ecNumber evidence="1">6.2.1.14</ecNumber>
    </recommendedName>
    <alternativeName>
        <fullName evidence="1">Pimeloyl-CoA synthase</fullName>
    </alternativeName>
</protein>
<reference key="1">
    <citation type="journal article" date="2009" name="J. Bacteriol.">
        <title>Complete and draft genome sequences of six members of the Aquificales.</title>
        <authorList>
            <person name="Reysenbach A.-L."/>
            <person name="Hamamura N."/>
            <person name="Podar M."/>
            <person name="Griffiths E."/>
            <person name="Ferreira S."/>
            <person name="Hochstein R."/>
            <person name="Heidelberg J."/>
            <person name="Johnson J."/>
            <person name="Mead D."/>
            <person name="Pohorille A."/>
            <person name="Sarmiento M."/>
            <person name="Schweighofer K."/>
            <person name="Seshadri R."/>
            <person name="Voytek M.A."/>
        </authorList>
    </citation>
    <scope>NUCLEOTIDE SEQUENCE [LARGE SCALE GENOMIC DNA]</scope>
    <source>
        <strain>DSM 14350 / EX-H1</strain>
    </source>
</reference>